<protein>
    <recommendedName>
        <fullName evidence="1">tRNA (guanine-N(7)-)-methyltransferase</fullName>
        <ecNumber evidence="1">2.1.1.33</ecNumber>
    </recommendedName>
    <alternativeName>
        <fullName evidence="1">Methyltransferase-like protein 1</fullName>
    </alternativeName>
    <alternativeName>
        <fullName evidence="1">mRNA (guanine-N(7)-)-methyltransferase</fullName>
        <ecNumber evidence="1">2.1.1.-</ecNumber>
    </alternativeName>
    <alternativeName>
        <fullName evidence="1">miRNA (guanine-N(7)-)-methyltransferase</fullName>
        <ecNumber evidence="1">2.1.1.-</ecNumber>
    </alternativeName>
    <alternativeName>
        <fullName evidence="1">tRNA (guanine(46)-N(7))-methyltransferase</fullName>
    </alternativeName>
    <alternativeName>
        <fullName evidence="1">tRNA(m7G46)-methyltransferase</fullName>
    </alternativeName>
</protein>
<accession>Q5XJ57</accession>
<accession>A7MCF3</accession>
<accession>F1QU80</accession>
<organism>
    <name type="scientific">Danio rerio</name>
    <name type="common">Zebrafish</name>
    <name type="synonym">Brachydanio rerio</name>
    <dbReference type="NCBI Taxonomy" id="7955"/>
    <lineage>
        <taxon>Eukaryota</taxon>
        <taxon>Metazoa</taxon>
        <taxon>Chordata</taxon>
        <taxon>Craniata</taxon>
        <taxon>Vertebrata</taxon>
        <taxon>Euteleostomi</taxon>
        <taxon>Actinopterygii</taxon>
        <taxon>Neopterygii</taxon>
        <taxon>Teleostei</taxon>
        <taxon>Ostariophysi</taxon>
        <taxon>Cypriniformes</taxon>
        <taxon>Danionidae</taxon>
        <taxon>Danioninae</taxon>
        <taxon>Danio</taxon>
    </lineage>
</organism>
<proteinExistence type="evidence at transcript level"/>
<dbReference type="EC" id="2.1.1.33" evidence="1"/>
<dbReference type="EC" id="2.1.1.-" evidence="1"/>
<dbReference type="EMBL" id="CABZ01008506">
    <property type="status" value="NOT_ANNOTATED_CDS"/>
    <property type="molecule type" value="Genomic_DNA"/>
</dbReference>
<dbReference type="EMBL" id="CABZ01061933">
    <property type="status" value="NOT_ANNOTATED_CDS"/>
    <property type="molecule type" value="Genomic_DNA"/>
</dbReference>
<dbReference type="EMBL" id="CABZ01061934">
    <property type="status" value="NOT_ANNOTATED_CDS"/>
    <property type="molecule type" value="Genomic_DNA"/>
</dbReference>
<dbReference type="EMBL" id="CU929297">
    <property type="status" value="NOT_ANNOTATED_CDS"/>
    <property type="molecule type" value="Genomic_DNA"/>
</dbReference>
<dbReference type="EMBL" id="BC083450">
    <property type="protein sequence ID" value="AAH83450.1"/>
    <property type="molecule type" value="mRNA"/>
</dbReference>
<dbReference type="EMBL" id="BC152158">
    <property type="protein sequence ID" value="AAI52159.1"/>
    <property type="molecule type" value="mRNA"/>
</dbReference>
<dbReference type="RefSeq" id="NP_001005952.1">
    <property type="nucleotide sequence ID" value="NM_001005952.1"/>
</dbReference>
<dbReference type="RefSeq" id="XP_005155729.1">
    <property type="nucleotide sequence ID" value="XM_005155672.3"/>
</dbReference>
<dbReference type="RefSeq" id="XP_005155730.1">
    <property type="nucleotide sequence ID" value="XM_005155673.5"/>
</dbReference>
<dbReference type="RefSeq" id="XP_009303993.1">
    <property type="nucleotide sequence ID" value="XM_009305718.2"/>
</dbReference>
<dbReference type="SMR" id="Q5XJ57"/>
<dbReference type="FunCoup" id="Q5XJ57">
    <property type="interactions" value="1475"/>
</dbReference>
<dbReference type="STRING" id="7955.ENSDARP00000128994"/>
<dbReference type="PaxDb" id="7955-ENSDARP00000101871"/>
<dbReference type="Ensembl" id="ENSDART00000109091">
    <property type="protein sequence ID" value="ENSDARP00000101871"/>
    <property type="gene ID" value="ENSDARG00000076518"/>
</dbReference>
<dbReference type="Ensembl" id="ENSDART00000154425">
    <property type="protein sequence ID" value="ENSDARP00000128994"/>
    <property type="gene ID" value="ENSDARG00000076518"/>
</dbReference>
<dbReference type="GeneID" id="449779"/>
<dbReference type="KEGG" id="dre:449779"/>
<dbReference type="AGR" id="ZFIN:ZDB-GENE-041010-24"/>
<dbReference type="CTD" id="4234"/>
<dbReference type="ZFIN" id="ZDB-GENE-041010-24">
    <property type="gene designation" value="mettl1"/>
</dbReference>
<dbReference type="eggNOG" id="KOG3115">
    <property type="taxonomic scope" value="Eukaryota"/>
</dbReference>
<dbReference type="InParanoid" id="Q5XJ57"/>
<dbReference type="OMA" id="LPNYFAK"/>
<dbReference type="OrthoDB" id="47276at2759"/>
<dbReference type="PhylomeDB" id="Q5XJ57"/>
<dbReference type="TreeFam" id="TF314083"/>
<dbReference type="UniPathway" id="UPA00989"/>
<dbReference type="PRO" id="PR:Q5XJ57"/>
<dbReference type="Proteomes" id="UP000000437">
    <property type="component" value="Chromosome 11"/>
</dbReference>
<dbReference type="Bgee" id="ENSDARG00000076518">
    <property type="expression patterns" value="Expressed in gastrula and 22 other cell types or tissues"/>
</dbReference>
<dbReference type="GO" id="GO:0005634">
    <property type="term" value="C:nucleus"/>
    <property type="evidence" value="ECO:0000250"/>
    <property type="project" value="UniProtKB"/>
</dbReference>
<dbReference type="GO" id="GO:0106143">
    <property type="term" value="C:tRNA (m7G46) methyltransferase complex"/>
    <property type="evidence" value="ECO:0000250"/>
    <property type="project" value="UniProtKB"/>
</dbReference>
<dbReference type="GO" id="GO:0043527">
    <property type="term" value="C:tRNA methyltransferase complex"/>
    <property type="evidence" value="ECO:0000318"/>
    <property type="project" value="GO_Central"/>
</dbReference>
<dbReference type="GO" id="GO:0160090">
    <property type="term" value="F:internal mRNA (guanine-N7-)-methyltransferase activity"/>
    <property type="evidence" value="ECO:0007669"/>
    <property type="project" value="RHEA"/>
</dbReference>
<dbReference type="GO" id="GO:0008176">
    <property type="term" value="F:tRNA (guanine(46)-N7)-methyltransferase activity"/>
    <property type="evidence" value="ECO:0000250"/>
    <property type="project" value="UniProtKB"/>
</dbReference>
<dbReference type="GO" id="GO:0000049">
    <property type="term" value="F:tRNA binding"/>
    <property type="evidence" value="ECO:0007669"/>
    <property type="project" value="UniProtKB-UniRule"/>
</dbReference>
<dbReference type="GO" id="GO:0036265">
    <property type="term" value="P:RNA (guanine-N7)-methylation"/>
    <property type="evidence" value="ECO:0000318"/>
    <property type="project" value="GO_Central"/>
</dbReference>
<dbReference type="GO" id="GO:0106004">
    <property type="term" value="P:tRNA (guanine-N7)-methylation"/>
    <property type="evidence" value="ECO:0000250"/>
    <property type="project" value="UniProtKB"/>
</dbReference>
<dbReference type="GO" id="GO:0030488">
    <property type="term" value="P:tRNA methylation"/>
    <property type="evidence" value="ECO:0000318"/>
    <property type="project" value="GO_Central"/>
</dbReference>
<dbReference type="GO" id="GO:0006400">
    <property type="term" value="P:tRNA modification"/>
    <property type="evidence" value="ECO:0000250"/>
    <property type="project" value="UniProtKB"/>
</dbReference>
<dbReference type="FunFam" id="3.40.50.150:FF:000060">
    <property type="entry name" value="tRNA (guanine-N(7)-)-methyltransferase"/>
    <property type="match status" value="1"/>
</dbReference>
<dbReference type="Gene3D" id="3.40.50.150">
    <property type="entry name" value="Vaccinia Virus protein VP39"/>
    <property type="match status" value="1"/>
</dbReference>
<dbReference type="HAMAP" id="MF_03055">
    <property type="entry name" value="tRNA_methyltr_TrmB_euk"/>
    <property type="match status" value="1"/>
</dbReference>
<dbReference type="InterPro" id="IPR029063">
    <property type="entry name" value="SAM-dependent_MTases_sf"/>
</dbReference>
<dbReference type="InterPro" id="IPR025763">
    <property type="entry name" value="Trm8_euk"/>
</dbReference>
<dbReference type="InterPro" id="IPR003358">
    <property type="entry name" value="tRNA_(Gua-N-7)_MeTrfase_Trmb"/>
</dbReference>
<dbReference type="NCBIfam" id="TIGR00091">
    <property type="entry name" value="tRNA (guanosine(46)-N7)-methyltransferase TrmB"/>
    <property type="match status" value="1"/>
</dbReference>
<dbReference type="PANTHER" id="PTHR23417">
    <property type="entry name" value="3-DEOXY-D-MANNO-OCTULOSONIC-ACID TRANSFERASE/TRNA GUANINE-N 7 - -METHYLTRANSFERASE"/>
    <property type="match status" value="1"/>
</dbReference>
<dbReference type="PANTHER" id="PTHR23417:SF16">
    <property type="entry name" value="TRNA (GUANINE-N(7)-)-METHYLTRANSFERASE"/>
    <property type="match status" value="1"/>
</dbReference>
<dbReference type="Pfam" id="PF02390">
    <property type="entry name" value="Methyltransf_4"/>
    <property type="match status" value="1"/>
</dbReference>
<dbReference type="SUPFAM" id="SSF53335">
    <property type="entry name" value="S-adenosyl-L-methionine-dependent methyltransferases"/>
    <property type="match status" value="1"/>
</dbReference>
<dbReference type="PROSITE" id="PS51625">
    <property type="entry name" value="SAM_MT_TRMB"/>
    <property type="match status" value="1"/>
</dbReference>
<comment type="function">
    <text evidence="1">Catalytic component of METTL1-WDR4 methyltransferase complex that mediates the formation of N(7)-methylguanine in a subset of RNA species, such as tRNAs, mRNAs and microRNAs (miRNAs). Catalyzes the formation of N(7)-methylguanine at position 46 (m7G46) in a large subset of tRNAs that contain the 5'-RAGGU-3' motif within the variable loop. M7G46 interacts with C13-G22 in the D-loop to stabilize tRNA tertiary structure and protect tRNAs from decay. Also acts as a methyltransferase for a subset of internal N(7)-methylguanine in mRNAs. Internal N(7)-methylguanine methylation of mRNAs in response to stress promotes their relocalization to stress granules, thereby suppressing their translation. Also methylates a specific subset of miRNAs.</text>
</comment>
<comment type="catalytic activity">
    <reaction evidence="1">
        <text>guanosine(46) in tRNA + S-adenosyl-L-methionine = N(7)-methylguanosine(46) in tRNA + S-adenosyl-L-homocysteine</text>
        <dbReference type="Rhea" id="RHEA:42708"/>
        <dbReference type="Rhea" id="RHEA-COMP:10188"/>
        <dbReference type="Rhea" id="RHEA-COMP:10189"/>
        <dbReference type="ChEBI" id="CHEBI:57856"/>
        <dbReference type="ChEBI" id="CHEBI:59789"/>
        <dbReference type="ChEBI" id="CHEBI:74269"/>
        <dbReference type="ChEBI" id="CHEBI:74480"/>
        <dbReference type="EC" id="2.1.1.33"/>
    </reaction>
</comment>
<comment type="catalytic activity">
    <reaction evidence="1">
        <text>a guanosine in mRNA + S-adenosyl-L-methionine = an N(7)-methylguanosine in mRNA + S-adenosyl-L-homocysteine</text>
        <dbReference type="Rhea" id="RHEA:60508"/>
        <dbReference type="Rhea" id="RHEA-COMP:15584"/>
        <dbReference type="Rhea" id="RHEA-COMP:15585"/>
        <dbReference type="ChEBI" id="CHEBI:57856"/>
        <dbReference type="ChEBI" id="CHEBI:59789"/>
        <dbReference type="ChEBI" id="CHEBI:74269"/>
        <dbReference type="ChEBI" id="CHEBI:74480"/>
    </reaction>
    <physiologicalReaction direction="left-to-right" evidence="1">
        <dbReference type="Rhea" id="RHEA:60509"/>
    </physiologicalReaction>
</comment>
<comment type="catalytic activity">
    <reaction evidence="1">
        <text>a guanosine in miRNA + S-adenosyl-L-methionine = an N(7)-methylguanosine in miRNA + S-adenosyl-L-homocysteine</text>
        <dbReference type="Rhea" id="RHEA:60512"/>
        <dbReference type="Rhea" id="RHEA-COMP:15587"/>
        <dbReference type="Rhea" id="RHEA-COMP:15588"/>
        <dbReference type="ChEBI" id="CHEBI:57856"/>
        <dbReference type="ChEBI" id="CHEBI:59789"/>
        <dbReference type="ChEBI" id="CHEBI:74269"/>
        <dbReference type="ChEBI" id="CHEBI:74480"/>
    </reaction>
    <physiologicalReaction direction="left-to-right" evidence="1">
        <dbReference type="Rhea" id="RHEA:60513"/>
    </physiologicalReaction>
</comment>
<comment type="pathway">
    <text evidence="1">tRNA modification; N(7)-methylguanine-tRNA biosynthesis.</text>
</comment>
<comment type="subunit">
    <text evidence="1">Catalytic component of the METTL1-WDR4 complex, composed of mettl1 and wdr4.</text>
</comment>
<comment type="subcellular location">
    <subcellularLocation>
        <location evidence="1">Nucleus</location>
    </subcellularLocation>
</comment>
<comment type="similarity">
    <text evidence="1">Belongs to the class I-like SAM-binding methyltransferase superfamily. TrmB family.</text>
</comment>
<gene>
    <name type="primary">mettl1</name>
    <name type="ORF">zgc:103636</name>
</gene>
<keyword id="KW-0489">Methyltransferase</keyword>
<keyword id="KW-0539">Nucleus</keyword>
<keyword id="KW-1185">Reference proteome</keyword>
<keyword id="KW-0694">RNA-binding</keyword>
<keyword id="KW-0949">S-adenosyl-L-methionine</keyword>
<keyword id="KW-0808">Transferase</keyword>
<keyword id="KW-0819">tRNA processing</keyword>
<keyword id="KW-0820">tRNA-binding</keyword>
<sequence>MSVCMPQKRYYRQRAHSNPMADHTFQYPVCPEQMDWSPLYPQYFPQQEEAGGAQVEFADIGCGYGGLLVQLSQLFPQQLILGLEIRVKVSDYVQDRIRSLRVAEPGRYQNIACLRSNAMKYLPNFFRKGQLSKMFFLFPDPHFKKTKHKWRIISPTLLAEYAYTLRIGGLVYTNTDVEEVHEWIVQHFSDHPLFSRVTEEQLADDIIVGHLGTCTEEGKKVQRNGGKNFLAVFRRVEDPQT</sequence>
<reference key="1">
    <citation type="journal article" date="2013" name="Nature">
        <title>The zebrafish reference genome sequence and its relationship to the human genome.</title>
        <authorList>
            <person name="Howe K."/>
            <person name="Clark M.D."/>
            <person name="Torroja C.F."/>
            <person name="Torrance J."/>
            <person name="Berthelot C."/>
            <person name="Muffato M."/>
            <person name="Collins J.E."/>
            <person name="Humphray S."/>
            <person name="McLaren K."/>
            <person name="Matthews L."/>
            <person name="McLaren S."/>
            <person name="Sealy I."/>
            <person name="Caccamo M."/>
            <person name="Churcher C."/>
            <person name="Scott C."/>
            <person name="Barrett J.C."/>
            <person name="Koch R."/>
            <person name="Rauch G.J."/>
            <person name="White S."/>
            <person name="Chow W."/>
            <person name="Kilian B."/>
            <person name="Quintais L.T."/>
            <person name="Guerra-Assuncao J.A."/>
            <person name="Zhou Y."/>
            <person name="Gu Y."/>
            <person name="Yen J."/>
            <person name="Vogel J.H."/>
            <person name="Eyre T."/>
            <person name="Redmond S."/>
            <person name="Banerjee R."/>
            <person name="Chi J."/>
            <person name="Fu B."/>
            <person name="Langley E."/>
            <person name="Maguire S.F."/>
            <person name="Laird G.K."/>
            <person name="Lloyd D."/>
            <person name="Kenyon E."/>
            <person name="Donaldson S."/>
            <person name="Sehra H."/>
            <person name="Almeida-King J."/>
            <person name="Loveland J."/>
            <person name="Trevanion S."/>
            <person name="Jones M."/>
            <person name="Quail M."/>
            <person name="Willey D."/>
            <person name="Hunt A."/>
            <person name="Burton J."/>
            <person name="Sims S."/>
            <person name="McLay K."/>
            <person name="Plumb B."/>
            <person name="Davis J."/>
            <person name="Clee C."/>
            <person name="Oliver K."/>
            <person name="Clark R."/>
            <person name="Riddle C."/>
            <person name="Elliot D."/>
            <person name="Threadgold G."/>
            <person name="Harden G."/>
            <person name="Ware D."/>
            <person name="Begum S."/>
            <person name="Mortimore B."/>
            <person name="Kerry G."/>
            <person name="Heath P."/>
            <person name="Phillimore B."/>
            <person name="Tracey A."/>
            <person name="Corby N."/>
            <person name="Dunn M."/>
            <person name="Johnson C."/>
            <person name="Wood J."/>
            <person name="Clark S."/>
            <person name="Pelan S."/>
            <person name="Griffiths G."/>
            <person name="Smith M."/>
            <person name="Glithero R."/>
            <person name="Howden P."/>
            <person name="Barker N."/>
            <person name="Lloyd C."/>
            <person name="Stevens C."/>
            <person name="Harley J."/>
            <person name="Holt K."/>
            <person name="Panagiotidis G."/>
            <person name="Lovell J."/>
            <person name="Beasley H."/>
            <person name="Henderson C."/>
            <person name="Gordon D."/>
            <person name="Auger K."/>
            <person name="Wright D."/>
            <person name="Collins J."/>
            <person name="Raisen C."/>
            <person name="Dyer L."/>
            <person name="Leung K."/>
            <person name="Robertson L."/>
            <person name="Ambridge K."/>
            <person name="Leongamornlert D."/>
            <person name="McGuire S."/>
            <person name="Gilderthorp R."/>
            <person name="Griffiths C."/>
            <person name="Manthravadi D."/>
            <person name="Nichol S."/>
            <person name="Barker G."/>
            <person name="Whitehead S."/>
            <person name="Kay M."/>
            <person name="Brown J."/>
            <person name="Murnane C."/>
            <person name="Gray E."/>
            <person name="Humphries M."/>
            <person name="Sycamore N."/>
            <person name="Barker D."/>
            <person name="Saunders D."/>
            <person name="Wallis J."/>
            <person name="Babbage A."/>
            <person name="Hammond S."/>
            <person name="Mashreghi-Mohammadi M."/>
            <person name="Barr L."/>
            <person name="Martin S."/>
            <person name="Wray P."/>
            <person name="Ellington A."/>
            <person name="Matthews N."/>
            <person name="Ellwood M."/>
            <person name="Woodmansey R."/>
            <person name="Clark G."/>
            <person name="Cooper J."/>
            <person name="Tromans A."/>
            <person name="Grafham D."/>
            <person name="Skuce C."/>
            <person name="Pandian R."/>
            <person name="Andrews R."/>
            <person name="Harrison E."/>
            <person name="Kimberley A."/>
            <person name="Garnett J."/>
            <person name="Fosker N."/>
            <person name="Hall R."/>
            <person name="Garner P."/>
            <person name="Kelly D."/>
            <person name="Bird C."/>
            <person name="Palmer S."/>
            <person name="Gehring I."/>
            <person name="Berger A."/>
            <person name="Dooley C.M."/>
            <person name="Ersan-Urun Z."/>
            <person name="Eser C."/>
            <person name="Geiger H."/>
            <person name="Geisler M."/>
            <person name="Karotki L."/>
            <person name="Kirn A."/>
            <person name="Konantz J."/>
            <person name="Konantz M."/>
            <person name="Oberlander M."/>
            <person name="Rudolph-Geiger S."/>
            <person name="Teucke M."/>
            <person name="Lanz C."/>
            <person name="Raddatz G."/>
            <person name="Osoegawa K."/>
            <person name="Zhu B."/>
            <person name="Rapp A."/>
            <person name="Widaa S."/>
            <person name="Langford C."/>
            <person name="Yang F."/>
            <person name="Schuster S.C."/>
            <person name="Carter N.P."/>
            <person name="Harrow J."/>
            <person name="Ning Z."/>
            <person name="Herrero J."/>
            <person name="Searle S.M."/>
            <person name="Enright A."/>
            <person name="Geisler R."/>
            <person name="Plasterk R.H."/>
            <person name="Lee C."/>
            <person name="Westerfield M."/>
            <person name="de Jong P.J."/>
            <person name="Zon L.I."/>
            <person name="Postlethwait J.H."/>
            <person name="Nusslein-Volhard C."/>
            <person name="Hubbard T.J."/>
            <person name="Roest Crollius H."/>
            <person name="Rogers J."/>
            <person name="Stemple D.L."/>
        </authorList>
    </citation>
    <scope>NUCLEOTIDE SEQUENCE [LARGE SCALE GENOMIC DNA]</scope>
    <source>
        <strain>Tuebingen</strain>
    </source>
</reference>
<reference key="2">
    <citation type="submission" date="2004-10" db="EMBL/GenBank/DDBJ databases">
        <authorList>
            <consortium name="NIH - Zebrafish Gene Collection (ZGC) project"/>
        </authorList>
    </citation>
    <scope>NUCLEOTIDE SEQUENCE [LARGE SCALE MRNA]</scope>
    <source>
        <tissue>Larva</tissue>
        <tissue>Olfactory epithelium</tissue>
    </source>
</reference>
<evidence type="ECO:0000255" key="1">
    <source>
        <dbReference type="HAMAP-Rule" id="MF_03055"/>
    </source>
</evidence>
<evidence type="ECO:0000305" key="2"/>
<name>TRMB_DANRE</name>
<feature type="chain" id="PRO_0000370558" description="tRNA (guanine-N(7)-)-methyltransferase">
    <location>
        <begin position="1"/>
        <end position="241"/>
    </location>
</feature>
<feature type="region of interest" description="AlphaC helix" evidence="1">
    <location>
        <begin position="141"/>
        <end position="149"/>
    </location>
</feature>
<feature type="region of interest" description="Alpha6 helix" evidence="1">
    <location>
        <begin position="215"/>
        <end position="223"/>
    </location>
</feature>
<feature type="active site" evidence="1">
    <location>
        <position position="140"/>
    </location>
</feature>
<feature type="binding site" evidence="1">
    <location>
        <position position="61"/>
    </location>
    <ligand>
        <name>S-adenosyl-L-methionine</name>
        <dbReference type="ChEBI" id="CHEBI:59789"/>
    </ligand>
</feature>
<feature type="binding site" evidence="1">
    <location>
        <position position="84"/>
    </location>
    <ligand>
        <name>S-adenosyl-L-methionine</name>
        <dbReference type="ChEBI" id="CHEBI:59789"/>
    </ligand>
</feature>
<feature type="binding site" evidence="1">
    <location>
        <position position="86"/>
    </location>
    <ligand>
        <name>S-adenosyl-L-methionine</name>
        <dbReference type="ChEBI" id="CHEBI:59789"/>
    </ligand>
</feature>
<feature type="binding site" evidence="1">
    <location>
        <position position="117"/>
    </location>
    <ligand>
        <name>S-adenosyl-L-methionine</name>
        <dbReference type="ChEBI" id="CHEBI:59789"/>
    </ligand>
</feature>
<feature type="binding site" evidence="1">
    <location>
        <position position="118"/>
    </location>
    <ligand>
        <name>S-adenosyl-L-methionine</name>
        <dbReference type="ChEBI" id="CHEBI:59789"/>
    </ligand>
</feature>
<feature type="binding site" evidence="1">
    <location>
        <position position="137"/>
    </location>
    <ligand>
        <name>S-adenosyl-L-methionine</name>
        <dbReference type="ChEBI" id="CHEBI:59789"/>
    </ligand>
</feature>
<feature type="binding site" evidence="1">
    <location>
        <position position="215"/>
    </location>
    <ligand>
        <name>S-adenosyl-L-methionine</name>
        <dbReference type="ChEBI" id="CHEBI:59789"/>
    </ligand>
</feature>
<feature type="binding site" evidence="1">
    <location>
        <position position="217"/>
    </location>
    <ligand>
        <name>S-adenosyl-L-methionine</name>
        <dbReference type="ChEBI" id="CHEBI:59789"/>
    </ligand>
</feature>
<feature type="sequence conflict" description="In Ref. 2; AAI52159." evidence="2" ref="2">
    <original>Q</original>
    <variation>L</variation>
    <location>
        <position position="73"/>
    </location>
</feature>
<feature type="sequence conflict" description="In Ref. 2; AAH83450." evidence="2" ref="2">
    <original>S</original>
    <variation>G</variation>
    <location>
        <position position="189"/>
    </location>
</feature>